<organism>
    <name type="scientific">Canis lupus familiaris</name>
    <name type="common">Dog</name>
    <name type="synonym">Canis familiaris</name>
    <dbReference type="NCBI Taxonomy" id="9615"/>
    <lineage>
        <taxon>Eukaryota</taxon>
        <taxon>Metazoa</taxon>
        <taxon>Chordata</taxon>
        <taxon>Craniata</taxon>
        <taxon>Vertebrata</taxon>
        <taxon>Euteleostomi</taxon>
        <taxon>Mammalia</taxon>
        <taxon>Eutheria</taxon>
        <taxon>Laurasiatheria</taxon>
        <taxon>Carnivora</taxon>
        <taxon>Caniformia</taxon>
        <taxon>Canidae</taxon>
        <taxon>Canis</taxon>
    </lineage>
</organism>
<comment type="function">
    <text evidence="1">Component of the large ribosomal subunit. The ribosome is a large ribonucleoprotein complex responsible for the synthesis of proteins in the cell. Binds directly to 26S ribosomal RNA.</text>
</comment>
<comment type="subunit">
    <text evidence="1">Component of the large ribosomal subunit. Mature ribosomes consist of a small (40S) and a large (60S) subunit. The 40S subunit contains about 33 different proteins and 1 molecule of RNA (18S). The 60S subunit contains about 49 different proteins and 3 molecules of RNA (28S, 5.8S and 5S).</text>
</comment>
<comment type="subcellular location">
    <subcellularLocation>
        <location evidence="1">Cytoplasm</location>
    </subcellularLocation>
</comment>
<comment type="PTM">
    <text evidence="1">Ubiquitinated at Lys-48 and Lys-83 by RNF14 and RNF25 in response to ribosome collisions (ribosome stalling).</text>
</comment>
<comment type="similarity">
    <text evidence="2">Belongs to the universal ribosomal protein uL11 family.</text>
</comment>
<keyword id="KW-0002">3D-structure</keyword>
<keyword id="KW-0007">Acetylation</keyword>
<keyword id="KW-0963">Cytoplasm</keyword>
<keyword id="KW-1017">Isopeptide bond</keyword>
<keyword id="KW-0597">Phosphoprotein</keyword>
<keyword id="KW-1185">Reference proteome</keyword>
<keyword id="KW-0687">Ribonucleoprotein</keyword>
<keyword id="KW-0689">Ribosomal protein</keyword>
<keyword id="KW-0832">Ubl conjugation</keyword>
<name>RL12_CANLF</name>
<reference key="1">
    <citation type="journal article" date="2005" name="Nature">
        <title>Genome sequence, comparative analysis and haplotype structure of the domestic dog.</title>
        <authorList>
            <person name="Lindblad-Toh K."/>
            <person name="Wade C.M."/>
            <person name="Mikkelsen T.S."/>
            <person name="Karlsson E.K."/>
            <person name="Jaffe D.B."/>
            <person name="Kamal M."/>
            <person name="Clamp M."/>
            <person name="Chang J.L."/>
            <person name="Kulbokas E.J. III"/>
            <person name="Zody M.C."/>
            <person name="Mauceli E."/>
            <person name="Xie X."/>
            <person name="Breen M."/>
            <person name="Wayne R.K."/>
            <person name="Ostrander E.A."/>
            <person name="Ponting C.P."/>
            <person name="Galibert F."/>
            <person name="Smith D.R."/>
            <person name="deJong P.J."/>
            <person name="Kirkness E.F."/>
            <person name="Alvarez P."/>
            <person name="Biagi T."/>
            <person name="Brockman W."/>
            <person name="Butler J."/>
            <person name="Chin C.-W."/>
            <person name="Cook A."/>
            <person name="Cuff J."/>
            <person name="Daly M.J."/>
            <person name="DeCaprio D."/>
            <person name="Gnerre S."/>
            <person name="Grabherr M."/>
            <person name="Kellis M."/>
            <person name="Kleber M."/>
            <person name="Bardeleben C."/>
            <person name="Goodstadt L."/>
            <person name="Heger A."/>
            <person name="Hitte C."/>
            <person name="Kim L."/>
            <person name="Koepfli K.-P."/>
            <person name="Parker H.G."/>
            <person name="Pollinger J.P."/>
            <person name="Searle S.M.J."/>
            <person name="Sutter N.B."/>
            <person name="Thomas R."/>
            <person name="Webber C."/>
            <person name="Baldwin J."/>
            <person name="Abebe A."/>
            <person name="Abouelleil A."/>
            <person name="Aftuck L."/>
            <person name="Ait-Zahra M."/>
            <person name="Aldredge T."/>
            <person name="Allen N."/>
            <person name="An P."/>
            <person name="Anderson S."/>
            <person name="Antoine C."/>
            <person name="Arachchi H."/>
            <person name="Aslam A."/>
            <person name="Ayotte L."/>
            <person name="Bachantsang P."/>
            <person name="Barry A."/>
            <person name="Bayul T."/>
            <person name="Benamara M."/>
            <person name="Berlin A."/>
            <person name="Bessette D."/>
            <person name="Blitshteyn B."/>
            <person name="Bloom T."/>
            <person name="Blye J."/>
            <person name="Boguslavskiy L."/>
            <person name="Bonnet C."/>
            <person name="Boukhgalter B."/>
            <person name="Brown A."/>
            <person name="Cahill P."/>
            <person name="Calixte N."/>
            <person name="Camarata J."/>
            <person name="Cheshatsang Y."/>
            <person name="Chu J."/>
            <person name="Citroen M."/>
            <person name="Collymore A."/>
            <person name="Cooke P."/>
            <person name="Dawoe T."/>
            <person name="Daza R."/>
            <person name="Decktor K."/>
            <person name="DeGray S."/>
            <person name="Dhargay N."/>
            <person name="Dooley K."/>
            <person name="Dooley K."/>
            <person name="Dorje P."/>
            <person name="Dorjee K."/>
            <person name="Dorris L."/>
            <person name="Duffey N."/>
            <person name="Dupes A."/>
            <person name="Egbiremolen O."/>
            <person name="Elong R."/>
            <person name="Falk J."/>
            <person name="Farina A."/>
            <person name="Faro S."/>
            <person name="Ferguson D."/>
            <person name="Ferreira P."/>
            <person name="Fisher S."/>
            <person name="FitzGerald M."/>
            <person name="Foley K."/>
            <person name="Foley C."/>
            <person name="Franke A."/>
            <person name="Friedrich D."/>
            <person name="Gage D."/>
            <person name="Garber M."/>
            <person name="Gearin G."/>
            <person name="Giannoukos G."/>
            <person name="Goode T."/>
            <person name="Goyette A."/>
            <person name="Graham J."/>
            <person name="Grandbois E."/>
            <person name="Gyaltsen K."/>
            <person name="Hafez N."/>
            <person name="Hagopian D."/>
            <person name="Hagos B."/>
            <person name="Hall J."/>
            <person name="Healy C."/>
            <person name="Hegarty R."/>
            <person name="Honan T."/>
            <person name="Horn A."/>
            <person name="Houde N."/>
            <person name="Hughes L."/>
            <person name="Hunnicutt L."/>
            <person name="Husby M."/>
            <person name="Jester B."/>
            <person name="Jones C."/>
            <person name="Kamat A."/>
            <person name="Kanga B."/>
            <person name="Kells C."/>
            <person name="Khazanovich D."/>
            <person name="Kieu A.C."/>
            <person name="Kisner P."/>
            <person name="Kumar M."/>
            <person name="Lance K."/>
            <person name="Landers T."/>
            <person name="Lara M."/>
            <person name="Lee W."/>
            <person name="Leger J.-P."/>
            <person name="Lennon N."/>
            <person name="Leuper L."/>
            <person name="LeVine S."/>
            <person name="Liu J."/>
            <person name="Liu X."/>
            <person name="Lokyitsang Y."/>
            <person name="Lokyitsang T."/>
            <person name="Lui A."/>
            <person name="Macdonald J."/>
            <person name="Major J."/>
            <person name="Marabella R."/>
            <person name="Maru K."/>
            <person name="Matthews C."/>
            <person name="McDonough S."/>
            <person name="Mehta T."/>
            <person name="Meldrim J."/>
            <person name="Melnikov A."/>
            <person name="Meneus L."/>
            <person name="Mihalev A."/>
            <person name="Mihova T."/>
            <person name="Miller K."/>
            <person name="Mittelman R."/>
            <person name="Mlenga V."/>
            <person name="Mulrain L."/>
            <person name="Munson G."/>
            <person name="Navidi A."/>
            <person name="Naylor J."/>
            <person name="Nguyen T."/>
            <person name="Nguyen N."/>
            <person name="Nguyen C."/>
            <person name="Nguyen T."/>
            <person name="Nicol R."/>
            <person name="Norbu N."/>
            <person name="Norbu C."/>
            <person name="Novod N."/>
            <person name="Nyima T."/>
            <person name="Olandt P."/>
            <person name="O'Neill B."/>
            <person name="O'Neill K."/>
            <person name="Osman S."/>
            <person name="Oyono L."/>
            <person name="Patti C."/>
            <person name="Perrin D."/>
            <person name="Phunkhang P."/>
            <person name="Pierre F."/>
            <person name="Priest M."/>
            <person name="Rachupka A."/>
            <person name="Raghuraman S."/>
            <person name="Rameau R."/>
            <person name="Ray V."/>
            <person name="Raymond C."/>
            <person name="Rege F."/>
            <person name="Rise C."/>
            <person name="Rogers J."/>
            <person name="Rogov P."/>
            <person name="Sahalie J."/>
            <person name="Settipalli S."/>
            <person name="Sharpe T."/>
            <person name="Shea T."/>
            <person name="Sheehan M."/>
            <person name="Sherpa N."/>
            <person name="Shi J."/>
            <person name="Shih D."/>
            <person name="Sloan J."/>
            <person name="Smith C."/>
            <person name="Sparrow T."/>
            <person name="Stalker J."/>
            <person name="Stange-Thomann N."/>
            <person name="Stavropoulos S."/>
            <person name="Stone C."/>
            <person name="Stone S."/>
            <person name="Sykes S."/>
            <person name="Tchuinga P."/>
            <person name="Tenzing P."/>
            <person name="Tesfaye S."/>
            <person name="Thoulutsang D."/>
            <person name="Thoulutsang Y."/>
            <person name="Topham K."/>
            <person name="Topping I."/>
            <person name="Tsamla T."/>
            <person name="Vassiliev H."/>
            <person name="Venkataraman V."/>
            <person name="Vo A."/>
            <person name="Wangchuk T."/>
            <person name="Wangdi T."/>
            <person name="Weiand M."/>
            <person name="Wilkinson J."/>
            <person name="Wilson A."/>
            <person name="Yadav S."/>
            <person name="Yang S."/>
            <person name="Yang X."/>
            <person name="Young G."/>
            <person name="Yu Q."/>
            <person name="Zainoun J."/>
            <person name="Zembek L."/>
            <person name="Zimmer A."/>
            <person name="Lander E.S."/>
        </authorList>
    </citation>
    <scope>NUCLEOTIDE SEQUENCE [LARGE SCALE GENOMIC DNA]</scope>
    <source>
        <strain>Boxer</strain>
    </source>
</reference>
<reference key="2">
    <citation type="journal article" date="2008" name="Structure">
        <title>Structure of the mammalian 80S ribosome at 8.7 A resolution.</title>
        <authorList>
            <person name="Chandramouli P."/>
            <person name="Topf M."/>
            <person name="Menetret J.F."/>
            <person name="Eswar N."/>
            <person name="Cannone J.J."/>
            <person name="Gutell R.R."/>
            <person name="Sali A."/>
            <person name="Akey C.W."/>
        </authorList>
    </citation>
    <scope>STRUCTURE BY ELECTRON MICROSCOPY (8.70 ANGSTROMS)</scope>
</reference>
<feature type="chain" id="PRO_0000405586" description="Large ribosomal subunit protein uL11">
    <location>
        <begin position="1"/>
        <end position="165"/>
    </location>
</feature>
<feature type="modified residue" description="Phosphoserine" evidence="1">
    <location>
        <position position="38"/>
    </location>
</feature>
<feature type="modified residue" description="N6-acetyllysine" evidence="1">
    <location>
        <position position="54"/>
    </location>
</feature>
<feature type="modified residue" description="Phosphoserine" evidence="1">
    <location>
        <position position="165"/>
    </location>
</feature>
<feature type="cross-link" description="Glycyl lysine isopeptide (Lys-Gly) (interchain with G-Cter in SUMO2)" evidence="1">
    <location>
        <position position="40"/>
    </location>
</feature>
<feature type="cross-link" description="Glycyl lysine isopeptide (Lys-Gly) (interchain with G-Cter in ubiquitin)" evidence="1">
    <location>
        <position position="48"/>
    </location>
</feature>
<feature type="cross-link" description="Glycyl lysine isopeptide (Lys-Gly) (interchain with G-Cter in ubiquitin)" evidence="1">
    <location>
        <position position="83"/>
    </location>
</feature>
<gene>
    <name type="primary">RPL12</name>
</gene>
<sequence length="165" mass="17819">MPPKFDPNEIKVVYLRCTGGEVGATSALAPKIGPLGLSPKKVGDDIAKATGDWKGLRITVKLTIQNRQAQIEVVPSASALIIKALKEPPRDRKKQKNIKHSGNITFDEIVNIARQMRHRSLARELSGTIKEILGTAQSVGCNVDGRHPHDIIDDINSGAVECPAS</sequence>
<protein>
    <recommendedName>
        <fullName evidence="2">Large ribosomal subunit protein uL11</fullName>
    </recommendedName>
    <alternativeName>
        <fullName>60S ribosomal protein L12</fullName>
    </alternativeName>
</protein>
<accession>E2RR58</accession>
<dbReference type="RefSeq" id="NP_001238885.1">
    <property type="nucleotide sequence ID" value="NM_001251956.1"/>
</dbReference>
<dbReference type="PDB" id="4V5Z">
    <property type="method" value="EM"/>
    <property type="resolution" value="8.70 A"/>
    <property type="chains" value="i=1-165"/>
</dbReference>
<dbReference type="PDBsum" id="4V5Z"/>
<dbReference type="SMR" id="E2RR58"/>
<dbReference type="FunCoup" id="E2RR58">
    <property type="interactions" value="1741"/>
</dbReference>
<dbReference type="STRING" id="9615.ENSCAFP00000050907"/>
<dbReference type="PaxDb" id="9612-ENSCAFP00000029847"/>
<dbReference type="Ensembl" id="ENSCAFT00000032052.6">
    <property type="protein sequence ID" value="ENSCAFP00000029847.4"/>
    <property type="gene ID" value="ENSCAFG00000020136.6"/>
</dbReference>
<dbReference type="Ensembl" id="ENSCAFT00000045165.3">
    <property type="protein sequence ID" value="ENSCAFP00000035849.1"/>
    <property type="gene ID" value="ENSCAFG00000020136.6"/>
</dbReference>
<dbReference type="Ensembl" id="ENSCAFT00030016990.1">
    <property type="protein sequence ID" value="ENSCAFP00030014847.1"/>
    <property type="gene ID" value="ENSCAFG00030009173.1"/>
</dbReference>
<dbReference type="Ensembl" id="ENSCAFT00030017076.1">
    <property type="protein sequence ID" value="ENSCAFP00030014922.1"/>
    <property type="gene ID" value="ENSCAFG00030009173.1"/>
</dbReference>
<dbReference type="Ensembl" id="ENSCAFT00040034270.1">
    <property type="protein sequence ID" value="ENSCAFP00040029833.1"/>
    <property type="gene ID" value="ENSCAFG00040018547.1"/>
</dbReference>
<dbReference type="Ensembl" id="ENSCAFT00040034370.1">
    <property type="protein sequence ID" value="ENSCAFP00040029926.1"/>
    <property type="gene ID" value="ENSCAFG00040018547.1"/>
</dbReference>
<dbReference type="Ensembl" id="ENSCAFT00845011528.1">
    <property type="protein sequence ID" value="ENSCAFP00845009006.1"/>
    <property type="gene ID" value="ENSCAFG00845006492.1"/>
</dbReference>
<dbReference type="Ensembl" id="ENSCAFT00845011582.1">
    <property type="protein sequence ID" value="ENSCAFP00845009049.1"/>
    <property type="gene ID" value="ENSCAFG00845006492.1"/>
</dbReference>
<dbReference type="GeneID" id="480716"/>
<dbReference type="KEGG" id="cfa:480716"/>
<dbReference type="CTD" id="6136"/>
<dbReference type="VEuPathDB" id="HostDB:ENSCAFG00845006492"/>
<dbReference type="VGNC" id="VGNC:111704">
    <property type="gene designation" value="RPL12"/>
</dbReference>
<dbReference type="eggNOG" id="KOG0886">
    <property type="taxonomic scope" value="Eukaryota"/>
</dbReference>
<dbReference type="GeneTree" id="ENSGT00390000006922"/>
<dbReference type="HOGENOM" id="CLU_074237_5_0_1"/>
<dbReference type="InParanoid" id="E2RR58"/>
<dbReference type="OrthoDB" id="3160at33554"/>
<dbReference type="Reactome" id="R-CFA-156827">
    <property type="pathway name" value="L13a-mediated translational silencing of Ceruloplasmin expression"/>
</dbReference>
<dbReference type="Reactome" id="R-CFA-1799339">
    <property type="pathway name" value="SRP-dependent cotranslational protein targeting to membrane"/>
</dbReference>
<dbReference type="Reactome" id="R-CFA-6791226">
    <property type="pathway name" value="Major pathway of rRNA processing in the nucleolus and cytosol"/>
</dbReference>
<dbReference type="Reactome" id="R-CFA-72689">
    <property type="pathway name" value="Formation of a pool of free 40S subunits"/>
</dbReference>
<dbReference type="Reactome" id="R-CFA-72706">
    <property type="pathway name" value="GTP hydrolysis and joining of the 60S ribosomal subunit"/>
</dbReference>
<dbReference type="Reactome" id="R-CFA-975956">
    <property type="pathway name" value="Nonsense Mediated Decay (NMD) independent of the Exon Junction Complex (EJC)"/>
</dbReference>
<dbReference type="Reactome" id="R-CFA-975957">
    <property type="pathway name" value="Nonsense Mediated Decay (NMD) enhanced by the Exon Junction Complex (EJC)"/>
</dbReference>
<dbReference type="Proteomes" id="UP000002254">
    <property type="component" value="Chromosome 9"/>
</dbReference>
<dbReference type="Proteomes" id="UP000694429">
    <property type="component" value="Chromosome 9"/>
</dbReference>
<dbReference type="Proteomes" id="UP000694542">
    <property type="component" value="Chromosome 9"/>
</dbReference>
<dbReference type="Proteomes" id="UP000805418">
    <property type="component" value="Chromosome 9"/>
</dbReference>
<dbReference type="Bgee" id="ENSCAFG00000020136">
    <property type="expression patterns" value="Expressed in lymph node and 48 other cell types or tissues"/>
</dbReference>
<dbReference type="GO" id="GO:0022625">
    <property type="term" value="C:cytosolic large ribosomal subunit"/>
    <property type="evidence" value="ECO:0000318"/>
    <property type="project" value="GO_Central"/>
</dbReference>
<dbReference type="GO" id="GO:0070180">
    <property type="term" value="F:large ribosomal subunit rRNA binding"/>
    <property type="evidence" value="ECO:0000318"/>
    <property type="project" value="GO_Central"/>
</dbReference>
<dbReference type="GO" id="GO:0003735">
    <property type="term" value="F:structural constituent of ribosome"/>
    <property type="evidence" value="ECO:0000318"/>
    <property type="project" value="GO_Central"/>
</dbReference>
<dbReference type="GO" id="GO:0006412">
    <property type="term" value="P:translation"/>
    <property type="evidence" value="ECO:0000318"/>
    <property type="project" value="GO_Central"/>
</dbReference>
<dbReference type="CDD" id="cd00349">
    <property type="entry name" value="Ribosomal_L11"/>
    <property type="match status" value="1"/>
</dbReference>
<dbReference type="FunFam" id="1.10.10.250:FF:000002">
    <property type="entry name" value="60S ribosomal protein L12"/>
    <property type="match status" value="1"/>
</dbReference>
<dbReference type="FunFam" id="3.30.1550.10:FF:000002">
    <property type="entry name" value="60S ribosomal protein L12"/>
    <property type="match status" value="1"/>
</dbReference>
<dbReference type="Gene3D" id="1.10.10.250">
    <property type="entry name" value="Ribosomal protein L11, C-terminal domain"/>
    <property type="match status" value="1"/>
</dbReference>
<dbReference type="Gene3D" id="3.30.1550.10">
    <property type="entry name" value="Ribosomal protein L11/L12, N-terminal domain"/>
    <property type="match status" value="1"/>
</dbReference>
<dbReference type="HAMAP" id="MF_00736">
    <property type="entry name" value="Ribosomal_uL11"/>
    <property type="match status" value="1"/>
</dbReference>
<dbReference type="InterPro" id="IPR000911">
    <property type="entry name" value="Ribosomal_uL11"/>
</dbReference>
<dbReference type="InterPro" id="IPR020783">
    <property type="entry name" value="Ribosomal_uL11_C"/>
</dbReference>
<dbReference type="InterPro" id="IPR036769">
    <property type="entry name" value="Ribosomal_uL11_C_sf"/>
</dbReference>
<dbReference type="InterPro" id="IPR020785">
    <property type="entry name" value="Ribosomal_uL11_CS"/>
</dbReference>
<dbReference type="InterPro" id="IPR020784">
    <property type="entry name" value="Ribosomal_uL11_N"/>
</dbReference>
<dbReference type="InterPro" id="IPR036796">
    <property type="entry name" value="Ribosomal_uL11_N_sf"/>
</dbReference>
<dbReference type="PANTHER" id="PTHR11661">
    <property type="entry name" value="60S RIBOSOMAL PROTEIN L12"/>
    <property type="match status" value="1"/>
</dbReference>
<dbReference type="PANTHER" id="PTHR11661:SF2">
    <property type="entry name" value="LARGE RIBOSOMAL SUBUNIT PROTEIN UL11"/>
    <property type="match status" value="1"/>
</dbReference>
<dbReference type="Pfam" id="PF00298">
    <property type="entry name" value="Ribosomal_L11"/>
    <property type="match status" value="1"/>
</dbReference>
<dbReference type="Pfam" id="PF03946">
    <property type="entry name" value="Ribosomal_L11_N"/>
    <property type="match status" value="1"/>
</dbReference>
<dbReference type="SMART" id="SM00649">
    <property type="entry name" value="RL11"/>
    <property type="match status" value="1"/>
</dbReference>
<dbReference type="SUPFAM" id="SSF54747">
    <property type="entry name" value="Ribosomal L11/L12e N-terminal domain"/>
    <property type="match status" value="1"/>
</dbReference>
<dbReference type="SUPFAM" id="SSF46906">
    <property type="entry name" value="Ribosomal protein L11, C-terminal domain"/>
    <property type="match status" value="1"/>
</dbReference>
<dbReference type="PROSITE" id="PS00359">
    <property type="entry name" value="RIBOSOMAL_L11"/>
    <property type="match status" value="1"/>
</dbReference>
<proteinExistence type="evidence at protein level"/>
<evidence type="ECO:0000250" key="1">
    <source>
        <dbReference type="UniProtKB" id="P30050"/>
    </source>
</evidence>
<evidence type="ECO:0000305" key="2"/>